<feature type="chain" id="PRO_1000049987" description="Gamma-glutamyl phosphate reductase">
    <location>
        <begin position="1"/>
        <end position="415"/>
    </location>
</feature>
<keyword id="KW-0028">Amino-acid biosynthesis</keyword>
<keyword id="KW-0963">Cytoplasm</keyword>
<keyword id="KW-0521">NADP</keyword>
<keyword id="KW-0560">Oxidoreductase</keyword>
<keyword id="KW-0641">Proline biosynthesis</keyword>
<keyword id="KW-1185">Reference proteome</keyword>
<comment type="function">
    <text evidence="1">Catalyzes the NADPH-dependent reduction of L-glutamate 5-phosphate into L-glutamate 5-semialdehyde and phosphate. The product spontaneously undergoes cyclization to form 1-pyrroline-5-carboxylate.</text>
</comment>
<comment type="catalytic activity">
    <reaction evidence="1">
        <text>L-glutamate 5-semialdehyde + phosphate + NADP(+) = L-glutamyl 5-phosphate + NADPH + H(+)</text>
        <dbReference type="Rhea" id="RHEA:19541"/>
        <dbReference type="ChEBI" id="CHEBI:15378"/>
        <dbReference type="ChEBI" id="CHEBI:43474"/>
        <dbReference type="ChEBI" id="CHEBI:57783"/>
        <dbReference type="ChEBI" id="CHEBI:58066"/>
        <dbReference type="ChEBI" id="CHEBI:58274"/>
        <dbReference type="ChEBI" id="CHEBI:58349"/>
        <dbReference type="EC" id="1.2.1.41"/>
    </reaction>
</comment>
<comment type="pathway">
    <text evidence="1">Amino-acid biosynthesis; L-proline biosynthesis; L-glutamate 5-semialdehyde from L-glutamate: step 2/2.</text>
</comment>
<comment type="subcellular location">
    <subcellularLocation>
        <location evidence="1">Cytoplasm</location>
    </subcellularLocation>
</comment>
<comment type="similarity">
    <text evidence="1">Belongs to the gamma-glutamyl phosphate reductase family.</text>
</comment>
<proteinExistence type="inferred from homology"/>
<sequence length="415" mass="44685">MDLQSLGKLAKEASYELAITGSEKKNAALEAIALALEANQDKIVSANKEDIQAGKEAGLTEALLDRLLLDETRLAGVVSDVRSVIKLDDPVGEEFDGKLLENGLKLSKRRVPIGVIGVIYEARPNVTIDIAVLSLKTGNACILRGGKETIRSNIVLVEVIQAALKSVGLPETSVQYIKSTDRALVGELLKMDDYVDMIIPRGNAGLQKFCKENSNIPVIVGGIGVCHLFADKSVDQEKALAIVANAKVQRPTVCNALETLLVHQDIAEEFLPKLHAHLAPMGVTLIAEEKAKAILGDKATLAEAGDFDREWLCLNLGVKVVADFHEAIMHIRTHSSGHSDGILTNDFTIANKFINVVNSAAVYINASTRFTDGSQFGLGAEVAVSTQKLHARGPMGLQELTTYKWIGIGENLIRP</sequence>
<reference key="1">
    <citation type="journal article" date="2008" name="BMC Genomics">
        <title>Genomics of an extreme psychrophile, Psychromonas ingrahamii.</title>
        <authorList>
            <person name="Riley M."/>
            <person name="Staley J.T."/>
            <person name="Danchin A."/>
            <person name="Wang T.Z."/>
            <person name="Brettin T.S."/>
            <person name="Hauser L.J."/>
            <person name="Land M.L."/>
            <person name="Thompson L.S."/>
        </authorList>
    </citation>
    <scope>NUCLEOTIDE SEQUENCE [LARGE SCALE GENOMIC DNA]</scope>
    <source>
        <strain>DSM 17664 / CCUG 51855 / 37</strain>
    </source>
</reference>
<gene>
    <name evidence="1" type="primary">proA</name>
    <name type="ordered locus">Ping_2952</name>
</gene>
<accession>A1SYT9</accession>
<dbReference type="EC" id="1.2.1.41" evidence="1"/>
<dbReference type="EMBL" id="CP000510">
    <property type="protein sequence ID" value="ABM04654.1"/>
    <property type="molecule type" value="Genomic_DNA"/>
</dbReference>
<dbReference type="RefSeq" id="WP_011771208.1">
    <property type="nucleotide sequence ID" value="NC_008709.1"/>
</dbReference>
<dbReference type="SMR" id="A1SYT9"/>
<dbReference type="STRING" id="357804.Ping_2952"/>
<dbReference type="KEGG" id="pin:Ping_2952"/>
<dbReference type="eggNOG" id="COG0014">
    <property type="taxonomic scope" value="Bacteria"/>
</dbReference>
<dbReference type="HOGENOM" id="CLU_030231_0_0_6"/>
<dbReference type="OrthoDB" id="9809970at2"/>
<dbReference type="UniPathway" id="UPA00098">
    <property type="reaction ID" value="UER00360"/>
</dbReference>
<dbReference type="Proteomes" id="UP000000639">
    <property type="component" value="Chromosome"/>
</dbReference>
<dbReference type="GO" id="GO:0005737">
    <property type="term" value="C:cytoplasm"/>
    <property type="evidence" value="ECO:0007669"/>
    <property type="project" value="UniProtKB-SubCell"/>
</dbReference>
<dbReference type="GO" id="GO:0004350">
    <property type="term" value="F:glutamate-5-semialdehyde dehydrogenase activity"/>
    <property type="evidence" value="ECO:0007669"/>
    <property type="project" value="UniProtKB-UniRule"/>
</dbReference>
<dbReference type="GO" id="GO:0050661">
    <property type="term" value="F:NADP binding"/>
    <property type="evidence" value="ECO:0007669"/>
    <property type="project" value="InterPro"/>
</dbReference>
<dbReference type="GO" id="GO:0055129">
    <property type="term" value="P:L-proline biosynthetic process"/>
    <property type="evidence" value="ECO:0007669"/>
    <property type="project" value="UniProtKB-UniRule"/>
</dbReference>
<dbReference type="CDD" id="cd07079">
    <property type="entry name" value="ALDH_F18-19_ProA-GPR"/>
    <property type="match status" value="1"/>
</dbReference>
<dbReference type="FunFam" id="3.40.309.10:FF:000006">
    <property type="entry name" value="Gamma-glutamyl phosphate reductase"/>
    <property type="match status" value="1"/>
</dbReference>
<dbReference type="Gene3D" id="3.40.605.10">
    <property type="entry name" value="Aldehyde Dehydrogenase, Chain A, domain 1"/>
    <property type="match status" value="1"/>
</dbReference>
<dbReference type="Gene3D" id="3.40.309.10">
    <property type="entry name" value="Aldehyde Dehydrogenase, Chain A, domain 2"/>
    <property type="match status" value="1"/>
</dbReference>
<dbReference type="HAMAP" id="MF_00412">
    <property type="entry name" value="ProA"/>
    <property type="match status" value="1"/>
</dbReference>
<dbReference type="InterPro" id="IPR016161">
    <property type="entry name" value="Ald_DH/histidinol_DH"/>
</dbReference>
<dbReference type="InterPro" id="IPR016163">
    <property type="entry name" value="Ald_DH_C"/>
</dbReference>
<dbReference type="InterPro" id="IPR016162">
    <property type="entry name" value="Ald_DH_N"/>
</dbReference>
<dbReference type="InterPro" id="IPR015590">
    <property type="entry name" value="Aldehyde_DH_dom"/>
</dbReference>
<dbReference type="InterPro" id="IPR020593">
    <property type="entry name" value="G-glutamylP_reductase_CS"/>
</dbReference>
<dbReference type="InterPro" id="IPR012134">
    <property type="entry name" value="Glu-5-SA_DH"/>
</dbReference>
<dbReference type="InterPro" id="IPR000965">
    <property type="entry name" value="GPR_dom"/>
</dbReference>
<dbReference type="NCBIfam" id="NF001221">
    <property type="entry name" value="PRK00197.1"/>
    <property type="match status" value="1"/>
</dbReference>
<dbReference type="NCBIfam" id="TIGR00407">
    <property type="entry name" value="proA"/>
    <property type="match status" value="1"/>
</dbReference>
<dbReference type="PANTHER" id="PTHR11063:SF8">
    <property type="entry name" value="DELTA-1-PYRROLINE-5-CARBOXYLATE SYNTHASE"/>
    <property type="match status" value="1"/>
</dbReference>
<dbReference type="PANTHER" id="PTHR11063">
    <property type="entry name" value="GLUTAMATE SEMIALDEHYDE DEHYDROGENASE"/>
    <property type="match status" value="1"/>
</dbReference>
<dbReference type="Pfam" id="PF00171">
    <property type="entry name" value="Aldedh"/>
    <property type="match status" value="1"/>
</dbReference>
<dbReference type="PIRSF" id="PIRSF000151">
    <property type="entry name" value="GPR"/>
    <property type="match status" value="1"/>
</dbReference>
<dbReference type="SUPFAM" id="SSF53720">
    <property type="entry name" value="ALDH-like"/>
    <property type="match status" value="1"/>
</dbReference>
<dbReference type="PROSITE" id="PS01223">
    <property type="entry name" value="PROA"/>
    <property type="match status" value="1"/>
</dbReference>
<protein>
    <recommendedName>
        <fullName evidence="1">Gamma-glutamyl phosphate reductase</fullName>
        <shortName evidence="1">GPR</shortName>
        <ecNumber evidence="1">1.2.1.41</ecNumber>
    </recommendedName>
    <alternativeName>
        <fullName evidence="1">Glutamate-5-semialdehyde dehydrogenase</fullName>
    </alternativeName>
    <alternativeName>
        <fullName evidence="1">Glutamyl-gamma-semialdehyde dehydrogenase</fullName>
        <shortName evidence="1">GSA dehydrogenase</shortName>
    </alternativeName>
</protein>
<name>PROA_PSYIN</name>
<evidence type="ECO:0000255" key="1">
    <source>
        <dbReference type="HAMAP-Rule" id="MF_00412"/>
    </source>
</evidence>
<organism>
    <name type="scientific">Psychromonas ingrahamii (strain DSM 17664 / CCUG 51855 / 37)</name>
    <dbReference type="NCBI Taxonomy" id="357804"/>
    <lineage>
        <taxon>Bacteria</taxon>
        <taxon>Pseudomonadati</taxon>
        <taxon>Pseudomonadota</taxon>
        <taxon>Gammaproteobacteria</taxon>
        <taxon>Alteromonadales</taxon>
        <taxon>Psychromonadaceae</taxon>
        <taxon>Psychromonas</taxon>
    </lineage>
</organism>